<evidence type="ECO:0000255" key="1">
    <source>
        <dbReference type="HAMAP-Rule" id="MF_00012"/>
    </source>
</evidence>
<proteinExistence type="inferred from homology"/>
<gene>
    <name evidence="1" type="primary">ilvD</name>
    <name type="ordered locus">APL_0097</name>
</gene>
<organism>
    <name type="scientific">Actinobacillus pleuropneumoniae serotype 5b (strain L20)</name>
    <dbReference type="NCBI Taxonomy" id="416269"/>
    <lineage>
        <taxon>Bacteria</taxon>
        <taxon>Pseudomonadati</taxon>
        <taxon>Pseudomonadota</taxon>
        <taxon>Gammaproteobacteria</taxon>
        <taxon>Pasteurellales</taxon>
        <taxon>Pasteurellaceae</taxon>
        <taxon>Actinobacillus</taxon>
    </lineage>
</organism>
<accession>A3MYG9</accession>
<sequence length="611" mass="65439">MPILRSATSTQGRNMAGARALWRATGMKENDFGKPIIAVVNSFTQFVPGHVHLRDMGKLVAEQIEAAGGVAKEFNTIAVDDGIAMGHGGMLYSLPSRDLIADSVEYMVNAHCADAMVCISNCDKITPGMLMAAMRLNIPAVFVSGGPMEAGKTKLSDQLIKLDLVDAMMKSADKTVCDDDVDAIEKSACPTCGSCSGMFTANSMNCLTEALGLSLPGNGSMLATHADRKELFLTAGRQIVELCKRYYEQDDASVLPRSIATKAAFENAMSLDIAMGGSTNTVLHLLAAAQEAEVDFTMADIDRLSRKVPCLSKVAPNTNKYHMEDVHRAGGIMAILGELERADLLHSDTRTVLGMTIGEQIAKYDITLTKDEAVHKFFRAGPAGIRTTKAFSQDCRWDTVDDDRQNGCIRSKEFAYSQDGGLAMLTGNIALDGCIVKTAGVDESILKFTGDAIVFESQEEAVEGILGGKVRAGHVVIIRYEGPKGGPGMQEMLYPTTYLKSIGLGKECALLTDGRFSGGTSGLSIGHCSPEAASGGTIGLVRDGDKIAIDIPNRSIQLLVSDEELAVRRAEQDTKGWKPANRQREVSMALKMFGHFATSADKGAVRDKTKL</sequence>
<protein>
    <recommendedName>
        <fullName evidence="1">Dihydroxy-acid dehydratase</fullName>
        <shortName evidence="1">DAD</shortName>
        <ecNumber evidence="1">4.2.1.9</ecNumber>
    </recommendedName>
</protein>
<comment type="function">
    <text evidence="1">Functions in the biosynthesis of branched-chain amino acids. Catalyzes the dehydration of (2R,3R)-2,3-dihydroxy-3-methylpentanoate (2,3-dihydroxy-3-methylvalerate) into 2-oxo-3-methylpentanoate (2-oxo-3-methylvalerate) and of (2R)-2,3-dihydroxy-3-methylbutanoate (2,3-dihydroxyisovalerate) into 2-oxo-3-methylbutanoate (2-oxoisovalerate), the penultimate precursor to L-isoleucine and L-valine, respectively.</text>
</comment>
<comment type="catalytic activity">
    <reaction evidence="1">
        <text>(2R)-2,3-dihydroxy-3-methylbutanoate = 3-methyl-2-oxobutanoate + H2O</text>
        <dbReference type="Rhea" id="RHEA:24809"/>
        <dbReference type="ChEBI" id="CHEBI:11851"/>
        <dbReference type="ChEBI" id="CHEBI:15377"/>
        <dbReference type="ChEBI" id="CHEBI:49072"/>
        <dbReference type="EC" id="4.2.1.9"/>
    </reaction>
    <physiologicalReaction direction="left-to-right" evidence="1">
        <dbReference type="Rhea" id="RHEA:24810"/>
    </physiologicalReaction>
</comment>
<comment type="catalytic activity">
    <reaction evidence="1">
        <text>(2R,3R)-2,3-dihydroxy-3-methylpentanoate = (S)-3-methyl-2-oxopentanoate + H2O</text>
        <dbReference type="Rhea" id="RHEA:27694"/>
        <dbReference type="ChEBI" id="CHEBI:15377"/>
        <dbReference type="ChEBI" id="CHEBI:35146"/>
        <dbReference type="ChEBI" id="CHEBI:49258"/>
        <dbReference type="EC" id="4.2.1.9"/>
    </reaction>
    <physiologicalReaction direction="left-to-right" evidence="1">
        <dbReference type="Rhea" id="RHEA:27695"/>
    </physiologicalReaction>
</comment>
<comment type="cofactor">
    <cofactor evidence="1">
        <name>[2Fe-2S] cluster</name>
        <dbReference type="ChEBI" id="CHEBI:190135"/>
    </cofactor>
    <text evidence="1">Binds 1 [2Fe-2S] cluster per subunit. This cluster acts as a Lewis acid cofactor.</text>
</comment>
<comment type="cofactor">
    <cofactor evidence="1">
        <name>Mg(2+)</name>
        <dbReference type="ChEBI" id="CHEBI:18420"/>
    </cofactor>
</comment>
<comment type="pathway">
    <text evidence="1">Amino-acid biosynthesis; L-isoleucine biosynthesis; L-isoleucine from 2-oxobutanoate: step 3/4.</text>
</comment>
<comment type="pathway">
    <text evidence="1">Amino-acid biosynthesis; L-valine biosynthesis; L-valine from pyruvate: step 3/4.</text>
</comment>
<comment type="subunit">
    <text evidence="1">Homodimer.</text>
</comment>
<comment type="similarity">
    <text evidence="1">Belongs to the IlvD/Edd family.</text>
</comment>
<dbReference type="EC" id="4.2.1.9" evidence="1"/>
<dbReference type="EMBL" id="CP000569">
    <property type="protein sequence ID" value="ABN73205.1"/>
    <property type="molecule type" value="Genomic_DNA"/>
</dbReference>
<dbReference type="RefSeq" id="WP_005606782.1">
    <property type="nucleotide sequence ID" value="NC_009053.1"/>
</dbReference>
<dbReference type="SMR" id="A3MYG9"/>
<dbReference type="STRING" id="416269.APL_0097"/>
<dbReference type="EnsemblBacteria" id="ABN73205">
    <property type="protein sequence ID" value="ABN73205"/>
    <property type="gene ID" value="APL_0097"/>
</dbReference>
<dbReference type="KEGG" id="apl:APL_0097"/>
<dbReference type="eggNOG" id="COG0129">
    <property type="taxonomic scope" value="Bacteria"/>
</dbReference>
<dbReference type="HOGENOM" id="CLU_014271_4_2_6"/>
<dbReference type="UniPathway" id="UPA00047">
    <property type="reaction ID" value="UER00057"/>
</dbReference>
<dbReference type="UniPathway" id="UPA00049">
    <property type="reaction ID" value="UER00061"/>
</dbReference>
<dbReference type="Proteomes" id="UP000001432">
    <property type="component" value="Chromosome"/>
</dbReference>
<dbReference type="GO" id="GO:0005829">
    <property type="term" value="C:cytosol"/>
    <property type="evidence" value="ECO:0007669"/>
    <property type="project" value="TreeGrafter"/>
</dbReference>
<dbReference type="GO" id="GO:0051537">
    <property type="term" value="F:2 iron, 2 sulfur cluster binding"/>
    <property type="evidence" value="ECO:0007669"/>
    <property type="project" value="UniProtKB-UniRule"/>
</dbReference>
<dbReference type="GO" id="GO:0004160">
    <property type="term" value="F:dihydroxy-acid dehydratase activity"/>
    <property type="evidence" value="ECO:0007669"/>
    <property type="project" value="UniProtKB-UniRule"/>
</dbReference>
<dbReference type="GO" id="GO:0000287">
    <property type="term" value="F:magnesium ion binding"/>
    <property type="evidence" value="ECO:0007669"/>
    <property type="project" value="UniProtKB-UniRule"/>
</dbReference>
<dbReference type="GO" id="GO:0009097">
    <property type="term" value="P:isoleucine biosynthetic process"/>
    <property type="evidence" value="ECO:0007669"/>
    <property type="project" value="UniProtKB-UniRule"/>
</dbReference>
<dbReference type="GO" id="GO:0009099">
    <property type="term" value="P:L-valine biosynthetic process"/>
    <property type="evidence" value="ECO:0007669"/>
    <property type="project" value="UniProtKB-UniRule"/>
</dbReference>
<dbReference type="FunFam" id="3.50.30.80:FF:000001">
    <property type="entry name" value="Dihydroxy-acid dehydratase"/>
    <property type="match status" value="1"/>
</dbReference>
<dbReference type="Gene3D" id="3.50.30.80">
    <property type="entry name" value="IlvD/EDD C-terminal domain-like"/>
    <property type="match status" value="1"/>
</dbReference>
<dbReference type="HAMAP" id="MF_00012">
    <property type="entry name" value="IlvD"/>
    <property type="match status" value="1"/>
</dbReference>
<dbReference type="InterPro" id="IPR042096">
    <property type="entry name" value="Dihydro-acid_dehy_C"/>
</dbReference>
<dbReference type="InterPro" id="IPR004404">
    <property type="entry name" value="DihydroxyA_deHydtase"/>
</dbReference>
<dbReference type="InterPro" id="IPR020558">
    <property type="entry name" value="DiOHA_6PGluconate_deHydtase_CS"/>
</dbReference>
<dbReference type="InterPro" id="IPR056740">
    <property type="entry name" value="ILV_EDD_C"/>
</dbReference>
<dbReference type="InterPro" id="IPR000581">
    <property type="entry name" value="ILV_EDD_N"/>
</dbReference>
<dbReference type="InterPro" id="IPR037237">
    <property type="entry name" value="IlvD/EDD_N"/>
</dbReference>
<dbReference type="NCBIfam" id="TIGR00110">
    <property type="entry name" value="ilvD"/>
    <property type="match status" value="1"/>
</dbReference>
<dbReference type="NCBIfam" id="NF009103">
    <property type="entry name" value="PRK12448.1"/>
    <property type="match status" value="1"/>
</dbReference>
<dbReference type="PANTHER" id="PTHR43661">
    <property type="entry name" value="D-XYLONATE DEHYDRATASE"/>
    <property type="match status" value="1"/>
</dbReference>
<dbReference type="PANTHER" id="PTHR43661:SF3">
    <property type="entry name" value="D-XYLONATE DEHYDRATASE YAGF-RELATED"/>
    <property type="match status" value="1"/>
</dbReference>
<dbReference type="Pfam" id="PF24877">
    <property type="entry name" value="ILV_EDD_C"/>
    <property type="match status" value="1"/>
</dbReference>
<dbReference type="Pfam" id="PF00920">
    <property type="entry name" value="ILVD_EDD_N"/>
    <property type="match status" value="1"/>
</dbReference>
<dbReference type="SUPFAM" id="SSF143975">
    <property type="entry name" value="IlvD/EDD N-terminal domain-like"/>
    <property type="match status" value="1"/>
</dbReference>
<dbReference type="SUPFAM" id="SSF52016">
    <property type="entry name" value="LeuD/IlvD-like"/>
    <property type="match status" value="1"/>
</dbReference>
<dbReference type="PROSITE" id="PS00886">
    <property type="entry name" value="ILVD_EDD_1"/>
    <property type="match status" value="1"/>
</dbReference>
<dbReference type="PROSITE" id="PS00887">
    <property type="entry name" value="ILVD_EDD_2"/>
    <property type="match status" value="1"/>
</dbReference>
<name>ILVD_ACTP2</name>
<keyword id="KW-0001">2Fe-2S</keyword>
<keyword id="KW-0028">Amino-acid biosynthesis</keyword>
<keyword id="KW-0100">Branched-chain amino acid biosynthesis</keyword>
<keyword id="KW-0408">Iron</keyword>
<keyword id="KW-0411">Iron-sulfur</keyword>
<keyword id="KW-0456">Lyase</keyword>
<keyword id="KW-0460">Magnesium</keyword>
<keyword id="KW-0479">Metal-binding</keyword>
<keyword id="KW-1185">Reference proteome</keyword>
<feature type="chain" id="PRO_1000000952" description="Dihydroxy-acid dehydratase">
    <location>
        <begin position="1"/>
        <end position="611"/>
    </location>
</feature>
<feature type="active site" description="Proton acceptor" evidence="1">
    <location>
        <position position="517"/>
    </location>
</feature>
<feature type="binding site" evidence="1">
    <location>
        <position position="81"/>
    </location>
    <ligand>
        <name>Mg(2+)</name>
        <dbReference type="ChEBI" id="CHEBI:18420"/>
    </ligand>
</feature>
<feature type="binding site" evidence="1">
    <location>
        <position position="122"/>
    </location>
    <ligand>
        <name>[2Fe-2S] cluster</name>
        <dbReference type="ChEBI" id="CHEBI:190135"/>
    </ligand>
</feature>
<feature type="binding site" evidence="1">
    <location>
        <position position="123"/>
    </location>
    <ligand>
        <name>Mg(2+)</name>
        <dbReference type="ChEBI" id="CHEBI:18420"/>
    </ligand>
</feature>
<feature type="binding site" description="via carbamate group" evidence="1">
    <location>
        <position position="124"/>
    </location>
    <ligand>
        <name>Mg(2+)</name>
        <dbReference type="ChEBI" id="CHEBI:18420"/>
    </ligand>
</feature>
<feature type="binding site" evidence="1">
    <location>
        <position position="195"/>
    </location>
    <ligand>
        <name>[2Fe-2S] cluster</name>
        <dbReference type="ChEBI" id="CHEBI:190135"/>
    </ligand>
</feature>
<feature type="binding site" evidence="1">
    <location>
        <position position="491"/>
    </location>
    <ligand>
        <name>Mg(2+)</name>
        <dbReference type="ChEBI" id="CHEBI:18420"/>
    </ligand>
</feature>
<feature type="modified residue" description="N6-carboxylysine" evidence="1">
    <location>
        <position position="124"/>
    </location>
</feature>
<reference key="1">
    <citation type="journal article" date="2008" name="J. Bacteriol.">
        <title>The complete genome sequence of Actinobacillus pleuropneumoniae L20 (serotype 5b).</title>
        <authorList>
            <person name="Foote S.J."/>
            <person name="Bosse J.T."/>
            <person name="Bouevitch A.B."/>
            <person name="Langford P.R."/>
            <person name="Young N.M."/>
            <person name="Nash J.H.E."/>
        </authorList>
    </citation>
    <scope>NUCLEOTIDE SEQUENCE [LARGE SCALE GENOMIC DNA]</scope>
    <source>
        <strain>L20</strain>
    </source>
</reference>